<reference key="1">
    <citation type="journal article" date="2004" name="Nature">
        <title>The DNA sequence and biology of human chromosome 19.</title>
        <authorList>
            <person name="Grimwood J."/>
            <person name="Gordon L.A."/>
            <person name="Olsen A.S."/>
            <person name="Terry A."/>
            <person name="Schmutz J."/>
            <person name="Lamerdin J.E."/>
            <person name="Hellsten U."/>
            <person name="Goodstein D."/>
            <person name="Couronne O."/>
            <person name="Tran-Gyamfi M."/>
            <person name="Aerts A."/>
            <person name="Altherr M."/>
            <person name="Ashworth L."/>
            <person name="Bajorek E."/>
            <person name="Black S."/>
            <person name="Branscomb E."/>
            <person name="Caenepeel S."/>
            <person name="Carrano A.V."/>
            <person name="Caoile C."/>
            <person name="Chan Y.M."/>
            <person name="Christensen M."/>
            <person name="Cleland C.A."/>
            <person name="Copeland A."/>
            <person name="Dalin E."/>
            <person name="Dehal P."/>
            <person name="Denys M."/>
            <person name="Detter J.C."/>
            <person name="Escobar J."/>
            <person name="Flowers D."/>
            <person name="Fotopulos D."/>
            <person name="Garcia C."/>
            <person name="Georgescu A.M."/>
            <person name="Glavina T."/>
            <person name="Gomez M."/>
            <person name="Gonzales E."/>
            <person name="Groza M."/>
            <person name="Hammon N."/>
            <person name="Hawkins T."/>
            <person name="Haydu L."/>
            <person name="Ho I."/>
            <person name="Huang W."/>
            <person name="Israni S."/>
            <person name="Jett J."/>
            <person name="Kadner K."/>
            <person name="Kimball H."/>
            <person name="Kobayashi A."/>
            <person name="Larionov V."/>
            <person name="Leem S.-H."/>
            <person name="Lopez F."/>
            <person name="Lou Y."/>
            <person name="Lowry S."/>
            <person name="Malfatti S."/>
            <person name="Martinez D."/>
            <person name="McCready P.M."/>
            <person name="Medina C."/>
            <person name="Morgan J."/>
            <person name="Nelson K."/>
            <person name="Nolan M."/>
            <person name="Ovcharenko I."/>
            <person name="Pitluck S."/>
            <person name="Pollard M."/>
            <person name="Popkie A.P."/>
            <person name="Predki P."/>
            <person name="Quan G."/>
            <person name="Ramirez L."/>
            <person name="Rash S."/>
            <person name="Retterer J."/>
            <person name="Rodriguez A."/>
            <person name="Rogers S."/>
            <person name="Salamov A."/>
            <person name="Salazar A."/>
            <person name="She X."/>
            <person name="Smith D."/>
            <person name="Slezak T."/>
            <person name="Solovyev V."/>
            <person name="Thayer N."/>
            <person name="Tice H."/>
            <person name="Tsai M."/>
            <person name="Ustaszewska A."/>
            <person name="Vo N."/>
            <person name="Wagner M."/>
            <person name="Wheeler J."/>
            <person name="Wu K."/>
            <person name="Xie G."/>
            <person name="Yang J."/>
            <person name="Dubchak I."/>
            <person name="Furey T.S."/>
            <person name="DeJong P."/>
            <person name="Dickson M."/>
            <person name="Gordon D."/>
            <person name="Eichler E.E."/>
            <person name="Pennacchio L.A."/>
            <person name="Richardson P."/>
            <person name="Stubbs L."/>
            <person name="Rokhsar D.S."/>
            <person name="Myers R.M."/>
            <person name="Rubin E.M."/>
            <person name="Lucas S.M."/>
        </authorList>
    </citation>
    <scope>NUCLEOTIDE SEQUENCE [LARGE SCALE GENOMIC DNA]</scope>
</reference>
<proteinExistence type="evidence at protein level"/>
<protein>
    <recommendedName>
        <fullName>Methyl-CpG-binding domain protein 3-like 3</fullName>
        <shortName>MBD3-like protein 3</shortName>
    </recommendedName>
</protein>
<gene>
    <name type="primary">MBD3L3</name>
</gene>
<name>MB3L3_HUMAN</name>
<feature type="chain" id="PRO_0000349233" description="Methyl-CpG-binding domain protein 3-like 3">
    <location>
        <begin position="1"/>
        <end position="208"/>
    </location>
</feature>
<comment type="interaction">
    <interactant intactId="EBI-17422057">
        <id>A6NE82</id>
    </interactant>
    <interactant intactId="EBI-11059915">
        <id>Q8N7C3</id>
        <label>TRIML2</label>
    </interactant>
    <organismsDiffer>false</organismsDiffer>
    <experiments>3</experiments>
</comment>
<comment type="miscellaneous">
    <text>The MBD3L proteins are encoded by strongly repeated regions of the 19p13 chromosome. The exact number of functional copies is unclear, and some of them may represent pseudogenes.</text>
</comment>
<comment type="similarity">
    <text evidence="1">Belongs to the MBD3L family.</text>
</comment>
<sequence>MGEPAFTSFPSPPVLGKLKRNMMPWALQKKREIHMAKAHRRRAARSALPMRLTSCIFRRPVTRIRSHPDNQVRRRKGDEHLEKPQQLCAYRRLQALQPCSSQGEGSSPLHLESVLSILAPGTAGESLDRAGAERVRSPLEPTPGRFPAVAGGPTPGMGCQLPPPLSGQLVTPADIRRQARRVKKARERLAKALQADRLARQAEMLTCR</sequence>
<organism>
    <name type="scientific">Homo sapiens</name>
    <name type="common">Human</name>
    <dbReference type="NCBI Taxonomy" id="9606"/>
    <lineage>
        <taxon>Eukaryota</taxon>
        <taxon>Metazoa</taxon>
        <taxon>Chordata</taxon>
        <taxon>Craniata</taxon>
        <taxon>Vertebrata</taxon>
        <taxon>Euteleostomi</taxon>
        <taxon>Mammalia</taxon>
        <taxon>Eutheria</taxon>
        <taxon>Euarchontoglires</taxon>
        <taxon>Primates</taxon>
        <taxon>Haplorrhini</taxon>
        <taxon>Catarrhini</taxon>
        <taxon>Hominidae</taxon>
        <taxon>Homo</taxon>
    </lineage>
</organism>
<evidence type="ECO:0000305" key="1"/>
<dbReference type="EMBL" id="AC010606">
    <property type="status" value="NOT_ANNOTATED_CDS"/>
    <property type="molecule type" value="Genomic_DNA"/>
</dbReference>
<dbReference type="CCDS" id="CCDS45944.1"/>
<dbReference type="RefSeq" id="NP_001157897.1">
    <property type="nucleotide sequence ID" value="NM_001164425.4"/>
</dbReference>
<dbReference type="RefSeq" id="XP_016855269.1">
    <property type="nucleotide sequence ID" value="XM_016999780.1"/>
</dbReference>
<dbReference type="SMR" id="A6NE82"/>
<dbReference type="BioGRID" id="575961">
    <property type="interactions" value="1"/>
</dbReference>
<dbReference type="FunCoup" id="A6NE82">
    <property type="interactions" value="345"/>
</dbReference>
<dbReference type="IntAct" id="A6NE82">
    <property type="interactions" value="1"/>
</dbReference>
<dbReference type="STRING" id="9606.ENSP00000333183"/>
<dbReference type="GlyGen" id="A6NE82">
    <property type="glycosylation" value="2 sites"/>
</dbReference>
<dbReference type="BioMuta" id="MBD3L3"/>
<dbReference type="MassIVE" id="A6NE82"/>
<dbReference type="PaxDb" id="9606-ENSP00000333183"/>
<dbReference type="Antibodypedia" id="57255">
    <property type="antibodies" value="60 antibodies from 14 providers"/>
</dbReference>
<dbReference type="DNASU" id="653657"/>
<dbReference type="Ensembl" id="ENST00000333843.9">
    <property type="protein sequence ID" value="ENSP00000333183.4"/>
    <property type="gene ID" value="ENSG00000182315.10"/>
</dbReference>
<dbReference type="Ensembl" id="ENST00000689071.1">
    <property type="protein sequence ID" value="ENSP00000509049.1"/>
    <property type="gene ID" value="ENSG00000182315.10"/>
</dbReference>
<dbReference type="Ensembl" id="ENST00000693237.1">
    <property type="protein sequence ID" value="ENSP00000508603.1"/>
    <property type="gene ID" value="ENSG00000182315.10"/>
</dbReference>
<dbReference type="GeneID" id="653657"/>
<dbReference type="KEGG" id="hsa:653657"/>
<dbReference type="MANE-Select" id="ENST00000333843.9">
    <property type="protein sequence ID" value="ENSP00000333183.4"/>
    <property type="RefSeq nucleotide sequence ID" value="NM_001164425.4"/>
    <property type="RefSeq protein sequence ID" value="NP_001157897.1"/>
</dbReference>
<dbReference type="UCSC" id="uc021uns.2">
    <property type="organism name" value="human"/>
</dbReference>
<dbReference type="AGR" id="HGNC:37205"/>
<dbReference type="CTD" id="653657"/>
<dbReference type="GeneCards" id="MBD3L3"/>
<dbReference type="HGNC" id="HGNC:37205">
    <property type="gene designation" value="MBD3L3"/>
</dbReference>
<dbReference type="HPA" id="ENSG00000182315">
    <property type="expression patterns" value="Not detected"/>
</dbReference>
<dbReference type="neXtProt" id="NX_A6NE82"/>
<dbReference type="OpenTargets" id="ENSG00000182315"/>
<dbReference type="VEuPathDB" id="HostDB:ENSG00000182315"/>
<dbReference type="eggNOG" id="KOG4161">
    <property type="taxonomic scope" value="Eukaryota"/>
</dbReference>
<dbReference type="GeneTree" id="ENSGT00950000183005"/>
<dbReference type="InParanoid" id="A6NE82"/>
<dbReference type="OMA" id="RYNQWDR"/>
<dbReference type="OrthoDB" id="9627514at2759"/>
<dbReference type="PAN-GO" id="A6NE82">
    <property type="GO annotations" value="0 GO annotations based on evolutionary models"/>
</dbReference>
<dbReference type="PhylomeDB" id="A6NE82"/>
<dbReference type="TreeFam" id="TF325032"/>
<dbReference type="PathwayCommons" id="A6NE82"/>
<dbReference type="BioGRID-ORCS" id="653657">
    <property type="hits" value="69 hits in 684 CRISPR screens"/>
</dbReference>
<dbReference type="GenomeRNAi" id="653657"/>
<dbReference type="Pharos" id="A6NE82">
    <property type="development level" value="Tdark"/>
</dbReference>
<dbReference type="Proteomes" id="UP000005640">
    <property type="component" value="Chromosome 19"/>
</dbReference>
<dbReference type="RNAct" id="A6NE82">
    <property type="molecule type" value="protein"/>
</dbReference>
<dbReference type="Bgee" id="ENSG00000182315">
    <property type="expression patterns" value="Expressed in primordial germ cell in gonad and 9 other cell types or tissues"/>
</dbReference>
<dbReference type="GO" id="GO:0005634">
    <property type="term" value="C:nucleus"/>
    <property type="evidence" value="ECO:0000318"/>
    <property type="project" value="GO_Central"/>
</dbReference>
<dbReference type="GO" id="GO:0008327">
    <property type="term" value="F:methyl-CpG binding"/>
    <property type="evidence" value="ECO:0000318"/>
    <property type="project" value="GO_Central"/>
</dbReference>
<dbReference type="GO" id="GO:0006346">
    <property type="term" value="P:DNA methylation-dependent constitutive heterochromatin formation"/>
    <property type="evidence" value="ECO:0000318"/>
    <property type="project" value="GO_Central"/>
</dbReference>
<dbReference type="GO" id="GO:0000122">
    <property type="term" value="P:negative regulation of transcription by RNA polymerase II"/>
    <property type="evidence" value="ECO:0000318"/>
    <property type="project" value="GO_Central"/>
</dbReference>
<dbReference type="InterPro" id="IPR032343">
    <property type="entry name" value="MBD2/MBD3_p55-bd"/>
</dbReference>
<dbReference type="InterPro" id="IPR025884">
    <property type="entry name" value="MeCpG-bd_2/3_C_dom"/>
</dbReference>
<dbReference type="Pfam" id="PF14048">
    <property type="entry name" value="MBD_C"/>
    <property type="match status" value="1"/>
</dbReference>
<dbReference type="Pfam" id="PF16564">
    <property type="entry name" value="MBDa"/>
    <property type="match status" value="1"/>
</dbReference>
<accession>A6NE82</accession>
<keyword id="KW-1185">Reference proteome</keyword>
<keyword id="KW-0678">Repressor</keyword>
<keyword id="KW-0804">Transcription</keyword>
<keyword id="KW-0805">Transcription regulation</keyword>